<keyword id="KW-0285">Flavoprotein</keyword>
<keyword id="KW-0288">FMN</keyword>
<keyword id="KW-0520">NAD</keyword>
<keyword id="KW-0521">NADP</keyword>
<keyword id="KW-0547">Nucleotide-binding</keyword>
<keyword id="KW-0560">Oxidoreductase</keyword>
<keyword id="KW-1185">Reference proteome</keyword>
<sequence length="199" mass="20881">MTKVLVLYYSAYGHIEAMANAVAEGAREAGATVDVKRVPELVPDDVAKASHYKLDQAAPIAKIEELANYDAIIVGTGTRFGRMASQMANFLDQAGGLWARGALNGKVGGAFTSTATQHGGQETTLFTIITNLLHFGMTIVGLNYGFAGQMKLDEVTGGSPYGATTITGGDGSRLPSENELAGARYQGRVIAETAKKLHG</sequence>
<proteinExistence type="inferred from homology"/>
<accession>A5ECG6</accession>
<gene>
    <name type="ordered locus">BBta_1650</name>
</gene>
<protein>
    <recommendedName>
        <fullName evidence="1">NAD(P)H dehydrogenase (quinone)</fullName>
        <ecNumber evidence="1">1.6.5.2</ecNumber>
    </recommendedName>
    <alternativeName>
        <fullName>Flavoprotein WrbA</fullName>
    </alternativeName>
    <alternativeName>
        <fullName evidence="1">NAD(P)H:quinone oxidoreductase</fullName>
        <shortName evidence="1">NQO</shortName>
    </alternativeName>
</protein>
<dbReference type="EC" id="1.6.5.2" evidence="1"/>
<dbReference type="EMBL" id="CP000494">
    <property type="protein sequence ID" value="ABQ33860.1"/>
    <property type="molecule type" value="Genomic_DNA"/>
</dbReference>
<dbReference type="RefSeq" id="WP_012041895.1">
    <property type="nucleotide sequence ID" value="NC_009485.1"/>
</dbReference>
<dbReference type="SMR" id="A5ECG6"/>
<dbReference type="STRING" id="288000.BBta_1650"/>
<dbReference type="KEGG" id="bbt:BBta_1650"/>
<dbReference type="eggNOG" id="COG0655">
    <property type="taxonomic scope" value="Bacteria"/>
</dbReference>
<dbReference type="HOGENOM" id="CLU_051402_0_2_5"/>
<dbReference type="OrthoDB" id="9801479at2"/>
<dbReference type="Proteomes" id="UP000000246">
    <property type="component" value="Chromosome"/>
</dbReference>
<dbReference type="GO" id="GO:0016020">
    <property type="term" value="C:membrane"/>
    <property type="evidence" value="ECO:0007669"/>
    <property type="project" value="TreeGrafter"/>
</dbReference>
<dbReference type="GO" id="GO:0050660">
    <property type="term" value="F:flavin adenine dinucleotide binding"/>
    <property type="evidence" value="ECO:0007669"/>
    <property type="project" value="UniProtKB-UniRule"/>
</dbReference>
<dbReference type="GO" id="GO:0010181">
    <property type="term" value="F:FMN binding"/>
    <property type="evidence" value="ECO:0007669"/>
    <property type="project" value="InterPro"/>
</dbReference>
<dbReference type="GO" id="GO:0051287">
    <property type="term" value="F:NAD binding"/>
    <property type="evidence" value="ECO:0007669"/>
    <property type="project" value="UniProtKB-UniRule"/>
</dbReference>
<dbReference type="GO" id="GO:0050136">
    <property type="term" value="F:NADH:ubiquinone reductase (non-electrogenic) activity"/>
    <property type="evidence" value="ECO:0007669"/>
    <property type="project" value="RHEA"/>
</dbReference>
<dbReference type="GO" id="GO:0050661">
    <property type="term" value="F:NADP binding"/>
    <property type="evidence" value="ECO:0007669"/>
    <property type="project" value="UniProtKB-UniRule"/>
</dbReference>
<dbReference type="GO" id="GO:0008753">
    <property type="term" value="F:NADPH dehydrogenase (quinone) activity"/>
    <property type="evidence" value="ECO:0007669"/>
    <property type="project" value="RHEA"/>
</dbReference>
<dbReference type="FunFam" id="3.40.50.360:FF:000001">
    <property type="entry name" value="NAD(P)H dehydrogenase (Quinone) FQR1-like"/>
    <property type="match status" value="1"/>
</dbReference>
<dbReference type="Gene3D" id="3.40.50.360">
    <property type="match status" value="1"/>
</dbReference>
<dbReference type="HAMAP" id="MF_01017">
    <property type="entry name" value="NQOR"/>
    <property type="match status" value="1"/>
</dbReference>
<dbReference type="InterPro" id="IPR008254">
    <property type="entry name" value="Flavodoxin/NO_synth"/>
</dbReference>
<dbReference type="InterPro" id="IPR029039">
    <property type="entry name" value="Flavoprotein-like_sf"/>
</dbReference>
<dbReference type="InterPro" id="IPR010089">
    <property type="entry name" value="Flavoprotein_WrbA-like"/>
</dbReference>
<dbReference type="InterPro" id="IPR005025">
    <property type="entry name" value="FMN_Rdtase-like_dom"/>
</dbReference>
<dbReference type="InterPro" id="IPR037513">
    <property type="entry name" value="NQO"/>
</dbReference>
<dbReference type="NCBIfam" id="TIGR01755">
    <property type="entry name" value="flav_wrbA"/>
    <property type="match status" value="1"/>
</dbReference>
<dbReference type="NCBIfam" id="NF002999">
    <property type="entry name" value="PRK03767.1"/>
    <property type="match status" value="1"/>
</dbReference>
<dbReference type="PANTHER" id="PTHR30546">
    <property type="entry name" value="FLAVODOXIN-RELATED PROTEIN WRBA-RELATED"/>
    <property type="match status" value="1"/>
</dbReference>
<dbReference type="PANTHER" id="PTHR30546:SF23">
    <property type="entry name" value="FLAVOPROTEIN-LIKE PROTEIN YCP4-RELATED"/>
    <property type="match status" value="1"/>
</dbReference>
<dbReference type="Pfam" id="PF03358">
    <property type="entry name" value="FMN_red"/>
    <property type="match status" value="1"/>
</dbReference>
<dbReference type="SUPFAM" id="SSF52218">
    <property type="entry name" value="Flavoproteins"/>
    <property type="match status" value="1"/>
</dbReference>
<dbReference type="PROSITE" id="PS50902">
    <property type="entry name" value="FLAVODOXIN_LIKE"/>
    <property type="match status" value="1"/>
</dbReference>
<comment type="catalytic activity">
    <reaction evidence="1">
        <text>a quinone + NADH + H(+) = a quinol + NAD(+)</text>
        <dbReference type="Rhea" id="RHEA:46160"/>
        <dbReference type="ChEBI" id="CHEBI:15378"/>
        <dbReference type="ChEBI" id="CHEBI:24646"/>
        <dbReference type="ChEBI" id="CHEBI:57540"/>
        <dbReference type="ChEBI" id="CHEBI:57945"/>
        <dbReference type="ChEBI" id="CHEBI:132124"/>
        <dbReference type="EC" id="1.6.5.2"/>
    </reaction>
</comment>
<comment type="catalytic activity">
    <reaction evidence="1">
        <text>a quinone + NADPH + H(+) = a quinol + NADP(+)</text>
        <dbReference type="Rhea" id="RHEA:46164"/>
        <dbReference type="ChEBI" id="CHEBI:15378"/>
        <dbReference type="ChEBI" id="CHEBI:24646"/>
        <dbReference type="ChEBI" id="CHEBI:57783"/>
        <dbReference type="ChEBI" id="CHEBI:58349"/>
        <dbReference type="ChEBI" id="CHEBI:132124"/>
        <dbReference type="EC" id="1.6.5.2"/>
    </reaction>
</comment>
<comment type="cofactor">
    <cofactor evidence="1">
        <name>FMN</name>
        <dbReference type="ChEBI" id="CHEBI:58210"/>
    </cofactor>
    <text evidence="1">Binds 1 FMN per monomer.</text>
</comment>
<comment type="similarity">
    <text evidence="1">Belongs to the WrbA family.</text>
</comment>
<organism>
    <name type="scientific">Bradyrhizobium sp. (strain BTAi1 / ATCC BAA-1182)</name>
    <dbReference type="NCBI Taxonomy" id="288000"/>
    <lineage>
        <taxon>Bacteria</taxon>
        <taxon>Pseudomonadati</taxon>
        <taxon>Pseudomonadota</taxon>
        <taxon>Alphaproteobacteria</taxon>
        <taxon>Hyphomicrobiales</taxon>
        <taxon>Nitrobacteraceae</taxon>
        <taxon>Bradyrhizobium</taxon>
    </lineage>
</organism>
<name>NQOR_BRASB</name>
<feature type="chain" id="PRO_1000084128" description="NAD(P)H dehydrogenase (quinone)">
    <location>
        <begin position="1"/>
        <end position="199"/>
    </location>
</feature>
<feature type="domain" description="Flavodoxin-like" evidence="1">
    <location>
        <begin position="4"/>
        <end position="190"/>
    </location>
</feature>
<feature type="binding site" evidence="1">
    <location>
        <begin position="10"/>
        <end position="15"/>
    </location>
    <ligand>
        <name>FMN</name>
        <dbReference type="ChEBI" id="CHEBI:58210"/>
    </ligand>
</feature>
<feature type="binding site" evidence="1">
    <location>
        <position position="12"/>
    </location>
    <ligand>
        <name>NAD(+)</name>
        <dbReference type="ChEBI" id="CHEBI:57540"/>
    </ligand>
</feature>
<feature type="binding site" evidence="1">
    <location>
        <begin position="78"/>
        <end position="80"/>
    </location>
    <ligand>
        <name>FMN</name>
        <dbReference type="ChEBI" id="CHEBI:58210"/>
    </ligand>
</feature>
<feature type="binding site" evidence="1">
    <location>
        <position position="98"/>
    </location>
    <ligand>
        <name>substrate</name>
    </ligand>
</feature>
<feature type="binding site" evidence="1">
    <location>
        <begin position="113"/>
        <end position="119"/>
    </location>
    <ligand>
        <name>FMN</name>
        <dbReference type="ChEBI" id="CHEBI:58210"/>
    </ligand>
</feature>
<feature type="binding site" evidence="1">
    <location>
        <position position="134"/>
    </location>
    <ligand>
        <name>FMN</name>
        <dbReference type="ChEBI" id="CHEBI:58210"/>
    </ligand>
</feature>
<reference key="1">
    <citation type="journal article" date="2007" name="Science">
        <title>Legumes symbioses: absence of nod genes in photosynthetic bradyrhizobia.</title>
        <authorList>
            <person name="Giraud E."/>
            <person name="Moulin L."/>
            <person name="Vallenet D."/>
            <person name="Barbe V."/>
            <person name="Cytryn E."/>
            <person name="Avarre J.-C."/>
            <person name="Jaubert M."/>
            <person name="Simon D."/>
            <person name="Cartieaux F."/>
            <person name="Prin Y."/>
            <person name="Bena G."/>
            <person name="Hannibal L."/>
            <person name="Fardoux J."/>
            <person name="Kojadinovic M."/>
            <person name="Vuillet L."/>
            <person name="Lajus A."/>
            <person name="Cruveiller S."/>
            <person name="Rouy Z."/>
            <person name="Mangenot S."/>
            <person name="Segurens B."/>
            <person name="Dossat C."/>
            <person name="Franck W.L."/>
            <person name="Chang W.-S."/>
            <person name="Saunders E."/>
            <person name="Bruce D."/>
            <person name="Richardson P."/>
            <person name="Normand P."/>
            <person name="Dreyfus B."/>
            <person name="Pignol D."/>
            <person name="Stacey G."/>
            <person name="Emerich D."/>
            <person name="Vermeglio A."/>
            <person name="Medigue C."/>
            <person name="Sadowsky M."/>
        </authorList>
    </citation>
    <scope>NUCLEOTIDE SEQUENCE [LARGE SCALE GENOMIC DNA]</scope>
    <source>
        <strain>BTAi1 / ATCC BAA-1182</strain>
    </source>
</reference>
<evidence type="ECO:0000255" key="1">
    <source>
        <dbReference type="HAMAP-Rule" id="MF_01017"/>
    </source>
</evidence>